<evidence type="ECO:0000255" key="1">
    <source>
        <dbReference type="HAMAP-Rule" id="MF_00480"/>
    </source>
</evidence>
<evidence type="ECO:0000305" key="2"/>
<name>RS7_METTH</name>
<gene>
    <name evidence="1" type="primary">rps7</name>
    <name type="ordered locus">MTH_1056</name>
</gene>
<protein>
    <recommendedName>
        <fullName evidence="1">Small ribosomal subunit protein uS7</fullName>
    </recommendedName>
    <alternativeName>
        <fullName evidence="2">30S ribosomal protein S7</fullName>
    </alternativeName>
</protein>
<feature type="chain" id="PRO_0000124406" description="Small ribosomal subunit protein uS7">
    <location>
        <begin position="1"/>
        <end position="186"/>
    </location>
</feature>
<dbReference type="EMBL" id="AE000666">
    <property type="protein sequence ID" value="AAB85547.1"/>
    <property type="molecule type" value="Genomic_DNA"/>
</dbReference>
<dbReference type="PIR" id="D69007">
    <property type="entry name" value="D69007"/>
</dbReference>
<dbReference type="RefSeq" id="WP_010876682.1">
    <property type="nucleotide sequence ID" value="NC_000916.1"/>
</dbReference>
<dbReference type="SMR" id="O27130"/>
<dbReference type="FunCoup" id="O27130">
    <property type="interactions" value="171"/>
</dbReference>
<dbReference type="STRING" id="187420.MTH_1056"/>
<dbReference type="PaxDb" id="187420-MTH_1056"/>
<dbReference type="EnsemblBacteria" id="AAB85547">
    <property type="protein sequence ID" value="AAB85547"/>
    <property type="gene ID" value="MTH_1056"/>
</dbReference>
<dbReference type="GeneID" id="1471464"/>
<dbReference type="KEGG" id="mth:MTH_1056"/>
<dbReference type="PATRIC" id="fig|187420.15.peg.1035"/>
<dbReference type="HOGENOM" id="CLU_063975_0_0_2"/>
<dbReference type="InParanoid" id="O27130"/>
<dbReference type="Proteomes" id="UP000005223">
    <property type="component" value="Chromosome"/>
</dbReference>
<dbReference type="GO" id="GO:0015935">
    <property type="term" value="C:small ribosomal subunit"/>
    <property type="evidence" value="ECO:0007669"/>
    <property type="project" value="InterPro"/>
</dbReference>
<dbReference type="GO" id="GO:0019843">
    <property type="term" value="F:rRNA binding"/>
    <property type="evidence" value="ECO:0007669"/>
    <property type="project" value="UniProtKB-UniRule"/>
</dbReference>
<dbReference type="GO" id="GO:0003735">
    <property type="term" value="F:structural constituent of ribosome"/>
    <property type="evidence" value="ECO:0007669"/>
    <property type="project" value="InterPro"/>
</dbReference>
<dbReference type="GO" id="GO:0006412">
    <property type="term" value="P:translation"/>
    <property type="evidence" value="ECO:0007669"/>
    <property type="project" value="UniProtKB-UniRule"/>
</dbReference>
<dbReference type="CDD" id="cd14867">
    <property type="entry name" value="uS7_Eukaryote"/>
    <property type="match status" value="1"/>
</dbReference>
<dbReference type="Gene3D" id="1.10.455.10">
    <property type="entry name" value="Ribosomal protein S7 domain"/>
    <property type="match status" value="1"/>
</dbReference>
<dbReference type="HAMAP" id="MF_00480_A">
    <property type="entry name" value="Ribosomal_uS7_A"/>
    <property type="match status" value="1"/>
</dbReference>
<dbReference type="InterPro" id="IPR000235">
    <property type="entry name" value="Ribosomal_uS7"/>
</dbReference>
<dbReference type="InterPro" id="IPR026018">
    <property type="entry name" value="Ribosomal_uS7_arc"/>
</dbReference>
<dbReference type="InterPro" id="IPR020606">
    <property type="entry name" value="Ribosomal_uS7_CS"/>
</dbReference>
<dbReference type="InterPro" id="IPR023798">
    <property type="entry name" value="Ribosomal_uS7_dom"/>
</dbReference>
<dbReference type="InterPro" id="IPR036823">
    <property type="entry name" value="Ribosomal_uS7_dom_sf"/>
</dbReference>
<dbReference type="InterPro" id="IPR005716">
    <property type="entry name" value="Ribosomal_uS7_euk/arc"/>
</dbReference>
<dbReference type="NCBIfam" id="NF003106">
    <property type="entry name" value="PRK04027.1"/>
    <property type="match status" value="1"/>
</dbReference>
<dbReference type="NCBIfam" id="TIGR01028">
    <property type="entry name" value="uS7_euk_arch"/>
    <property type="match status" value="1"/>
</dbReference>
<dbReference type="PANTHER" id="PTHR11205">
    <property type="entry name" value="RIBOSOMAL PROTEIN S7"/>
    <property type="match status" value="1"/>
</dbReference>
<dbReference type="Pfam" id="PF00177">
    <property type="entry name" value="Ribosomal_S7"/>
    <property type="match status" value="1"/>
</dbReference>
<dbReference type="PIRSF" id="PIRSF002122">
    <property type="entry name" value="RPS7p_RPS7a_RPS5e_RPS7o"/>
    <property type="match status" value="1"/>
</dbReference>
<dbReference type="SUPFAM" id="SSF47973">
    <property type="entry name" value="Ribosomal protein S7"/>
    <property type="match status" value="1"/>
</dbReference>
<dbReference type="PROSITE" id="PS00052">
    <property type="entry name" value="RIBOSOMAL_S7"/>
    <property type="match status" value="1"/>
</dbReference>
<accession>O27130</accession>
<keyword id="KW-1185">Reference proteome</keyword>
<keyword id="KW-0687">Ribonucleoprotein</keyword>
<keyword id="KW-0689">Ribosomal protein</keyword>
<keyword id="KW-0694">RNA-binding</keyword>
<keyword id="KW-0699">rRNA-binding</keyword>
<organism>
    <name type="scientific">Methanothermobacter thermautotrophicus (strain ATCC 29096 / DSM 1053 / JCM 10044 / NBRC 100330 / Delta H)</name>
    <name type="common">Methanobacterium thermoautotrophicum</name>
    <dbReference type="NCBI Taxonomy" id="187420"/>
    <lineage>
        <taxon>Archaea</taxon>
        <taxon>Methanobacteriati</taxon>
        <taxon>Methanobacteriota</taxon>
        <taxon>Methanomada group</taxon>
        <taxon>Methanobacteria</taxon>
        <taxon>Methanobacteriales</taxon>
        <taxon>Methanobacteriaceae</taxon>
        <taxon>Methanothermobacter</taxon>
    </lineage>
</organism>
<comment type="function">
    <text evidence="1">One of the primary rRNA binding proteins, it binds directly to 16S rRNA where it nucleates assembly of the head domain of the 30S subunit. Is located at the subunit interface close to the decoding center.</text>
</comment>
<comment type="subunit">
    <text evidence="1">Part of the 30S ribosomal subunit.</text>
</comment>
<comment type="similarity">
    <text evidence="1">Belongs to the universal ribosomal protein uS7 family.</text>
</comment>
<reference key="1">
    <citation type="journal article" date="1997" name="J. Bacteriol.">
        <title>Complete genome sequence of Methanobacterium thermoautotrophicum deltaH: functional analysis and comparative genomics.</title>
        <authorList>
            <person name="Smith D.R."/>
            <person name="Doucette-Stamm L.A."/>
            <person name="Deloughery C."/>
            <person name="Lee H.-M."/>
            <person name="Dubois J."/>
            <person name="Aldredge T."/>
            <person name="Bashirzadeh R."/>
            <person name="Blakely D."/>
            <person name="Cook R."/>
            <person name="Gilbert K."/>
            <person name="Harrison D."/>
            <person name="Hoang L."/>
            <person name="Keagle P."/>
            <person name="Lumm W."/>
            <person name="Pothier B."/>
            <person name="Qiu D."/>
            <person name="Spadafora R."/>
            <person name="Vicare R."/>
            <person name="Wang Y."/>
            <person name="Wierzbowski J."/>
            <person name="Gibson R."/>
            <person name="Jiwani N."/>
            <person name="Caruso A."/>
            <person name="Bush D."/>
            <person name="Safer H."/>
            <person name="Patwell D."/>
            <person name="Prabhakar S."/>
            <person name="McDougall S."/>
            <person name="Shimer G."/>
            <person name="Goyal A."/>
            <person name="Pietrovski S."/>
            <person name="Church G.M."/>
            <person name="Daniels C.J."/>
            <person name="Mao J.-I."/>
            <person name="Rice P."/>
            <person name="Noelling J."/>
            <person name="Reeve J.N."/>
        </authorList>
    </citation>
    <scope>NUCLEOTIDE SEQUENCE [LARGE SCALE GENOMIC DNA]</scope>
    <source>
        <strain>ATCC 29096 / DSM 1053 / JCM 10044 / NBRC 100330 / Delta H</strain>
    </source>
</reference>
<proteinExistence type="inferred from homology"/>
<sequence length="186" mass="21374">MSLVFDKWELDEVKVEDMGLAKYICLDSILVPHTMGRHVKRQFAKSKVSIVERLINKVMRTERNSGKKNKAYKIVQEAFEIINRRTKENPVQILVKAVENTSPREETTRIKYGGIGYQVAVDISPQRRVDLSLGFITRGAMQAAFKNKKSIEECLANEIMLAAEYDTRSFAIQKKEEKERIARSAH</sequence>